<comment type="function">
    <text evidence="1">Catalyzes the reversible formation of acyl-phosphate (acyl-PO(4)) from acyl-[acyl-carrier-protein] (acyl-ACP). This enzyme utilizes acyl-ACP as fatty acyl donor, but not acyl-CoA.</text>
</comment>
<comment type="catalytic activity">
    <reaction evidence="1">
        <text>a fatty acyl-[ACP] + phosphate = an acyl phosphate + holo-[ACP]</text>
        <dbReference type="Rhea" id="RHEA:42292"/>
        <dbReference type="Rhea" id="RHEA-COMP:9685"/>
        <dbReference type="Rhea" id="RHEA-COMP:14125"/>
        <dbReference type="ChEBI" id="CHEBI:43474"/>
        <dbReference type="ChEBI" id="CHEBI:59918"/>
        <dbReference type="ChEBI" id="CHEBI:64479"/>
        <dbReference type="ChEBI" id="CHEBI:138651"/>
        <dbReference type="EC" id="2.3.1.274"/>
    </reaction>
</comment>
<comment type="pathway">
    <text evidence="1">Lipid metabolism; phospholipid metabolism.</text>
</comment>
<comment type="subunit">
    <text evidence="1">Homodimer. Probably interacts with PlsY.</text>
</comment>
<comment type="subcellular location">
    <subcellularLocation>
        <location evidence="1">Cytoplasm</location>
    </subcellularLocation>
    <text evidence="1">Associated with the membrane possibly through PlsY.</text>
</comment>
<comment type="similarity">
    <text evidence="1">Belongs to the PlsX family.</text>
</comment>
<sequence>MPELNIAIDAMGGDNGPSIVIEALEKAVHRYPDVKFTVVGHEQQLTPLLDKFNLSSHPSINLVHAEQVIEMDDKPGQSLRSKPESSMRVALQSLTDGNCQAMVSGGNTGALMTNAYFTLKTLPGVLRPALMTALPNQTGGKSYLLDLGANASCDSETLFQFGVMGAVAAEYLSGVPAPKISLLNMGEEDIKGNDVVRNAAARLAQCEQLNYIGFIEGNHLFSGRADVVVCDGFVGNVALKSCEGLATFIIDQMRDTLNSHWLYRFFFRFLQKRTHKSWDRLKPDHYNGASLIGLRHVVIKSHGSASAGAFYSAIQQAVAEAHEQLPERIKHRVEAVLSEQL</sequence>
<feature type="chain" id="PRO_0000189889" description="Phosphate acyltransferase">
    <location>
        <begin position="1"/>
        <end position="341"/>
    </location>
</feature>
<organism>
    <name type="scientific">Idiomarina loihiensis (strain ATCC BAA-735 / DSM 15497 / L2-TR)</name>
    <dbReference type="NCBI Taxonomy" id="283942"/>
    <lineage>
        <taxon>Bacteria</taxon>
        <taxon>Pseudomonadati</taxon>
        <taxon>Pseudomonadota</taxon>
        <taxon>Gammaproteobacteria</taxon>
        <taxon>Alteromonadales</taxon>
        <taxon>Idiomarinaceae</taxon>
        <taxon>Idiomarina</taxon>
    </lineage>
</organism>
<dbReference type="EC" id="2.3.1.274" evidence="1"/>
<dbReference type="EMBL" id="AE017340">
    <property type="protein sequence ID" value="AAV82183.1"/>
    <property type="molecule type" value="Genomic_DNA"/>
</dbReference>
<dbReference type="RefSeq" id="WP_011234589.1">
    <property type="nucleotide sequence ID" value="NC_006512.1"/>
</dbReference>
<dbReference type="SMR" id="Q5QZ38"/>
<dbReference type="STRING" id="283942.IL1343"/>
<dbReference type="GeneID" id="41336519"/>
<dbReference type="KEGG" id="ilo:IL1343"/>
<dbReference type="eggNOG" id="COG0416">
    <property type="taxonomic scope" value="Bacteria"/>
</dbReference>
<dbReference type="HOGENOM" id="CLU_039379_1_0_6"/>
<dbReference type="OrthoDB" id="9806408at2"/>
<dbReference type="UniPathway" id="UPA00085"/>
<dbReference type="Proteomes" id="UP000001171">
    <property type="component" value="Chromosome"/>
</dbReference>
<dbReference type="GO" id="GO:0005737">
    <property type="term" value="C:cytoplasm"/>
    <property type="evidence" value="ECO:0007669"/>
    <property type="project" value="UniProtKB-SubCell"/>
</dbReference>
<dbReference type="GO" id="GO:0043811">
    <property type="term" value="F:phosphate:acyl-[acyl carrier protein] acyltransferase activity"/>
    <property type="evidence" value="ECO:0007669"/>
    <property type="project" value="UniProtKB-UniRule"/>
</dbReference>
<dbReference type="GO" id="GO:0006633">
    <property type="term" value="P:fatty acid biosynthetic process"/>
    <property type="evidence" value="ECO:0007669"/>
    <property type="project" value="UniProtKB-UniRule"/>
</dbReference>
<dbReference type="GO" id="GO:0008654">
    <property type="term" value="P:phospholipid biosynthetic process"/>
    <property type="evidence" value="ECO:0007669"/>
    <property type="project" value="UniProtKB-KW"/>
</dbReference>
<dbReference type="Gene3D" id="3.40.718.10">
    <property type="entry name" value="Isopropylmalate Dehydrogenase"/>
    <property type="match status" value="1"/>
</dbReference>
<dbReference type="HAMAP" id="MF_00019">
    <property type="entry name" value="PlsX"/>
    <property type="match status" value="1"/>
</dbReference>
<dbReference type="InterPro" id="IPR003664">
    <property type="entry name" value="FA_synthesis"/>
</dbReference>
<dbReference type="InterPro" id="IPR012281">
    <property type="entry name" value="Phospholipid_synth_PlsX-like"/>
</dbReference>
<dbReference type="NCBIfam" id="TIGR00182">
    <property type="entry name" value="plsX"/>
    <property type="match status" value="1"/>
</dbReference>
<dbReference type="PANTHER" id="PTHR30100">
    <property type="entry name" value="FATTY ACID/PHOSPHOLIPID SYNTHESIS PROTEIN PLSX"/>
    <property type="match status" value="1"/>
</dbReference>
<dbReference type="PANTHER" id="PTHR30100:SF1">
    <property type="entry name" value="PHOSPHATE ACYLTRANSFERASE"/>
    <property type="match status" value="1"/>
</dbReference>
<dbReference type="Pfam" id="PF02504">
    <property type="entry name" value="FA_synthesis"/>
    <property type="match status" value="1"/>
</dbReference>
<dbReference type="PIRSF" id="PIRSF002465">
    <property type="entry name" value="Phsphlp_syn_PlsX"/>
    <property type="match status" value="1"/>
</dbReference>
<dbReference type="SUPFAM" id="SSF53659">
    <property type="entry name" value="Isocitrate/Isopropylmalate dehydrogenase-like"/>
    <property type="match status" value="1"/>
</dbReference>
<proteinExistence type="inferred from homology"/>
<accession>Q5QZ38</accession>
<name>PLSX_IDILO</name>
<keyword id="KW-0963">Cytoplasm</keyword>
<keyword id="KW-0444">Lipid biosynthesis</keyword>
<keyword id="KW-0443">Lipid metabolism</keyword>
<keyword id="KW-0594">Phospholipid biosynthesis</keyword>
<keyword id="KW-1208">Phospholipid metabolism</keyword>
<keyword id="KW-1185">Reference proteome</keyword>
<keyword id="KW-0808">Transferase</keyword>
<protein>
    <recommendedName>
        <fullName evidence="1">Phosphate acyltransferase</fullName>
        <ecNumber evidence="1">2.3.1.274</ecNumber>
    </recommendedName>
    <alternativeName>
        <fullName evidence="1">Acyl-ACP phosphotransacylase</fullName>
    </alternativeName>
    <alternativeName>
        <fullName evidence="1">Acyl-[acyl-carrier-protein]--phosphate acyltransferase</fullName>
    </alternativeName>
    <alternativeName>
        <fullName evidence="1">Phosphate-acyl-ACP acyltransferase</fullName>
    </alternativeName>
</protein>
<reference key="1">
    <citation type="journal article" date="2004" name="Proc. Natl. Acad. Sci. U.S.A.">
        <title>Genome sequence of the deep-sea gamma-proteobacterium Idiomarina loihiensis reveals amino acid fermentation as a source of carbon and energy.</title>
        <authorList>
            <person name="Hou S."/>
            <person name="Saw J.H."/>
            <person name="Lee K.S."/>
            <person name="Freitas T.A."/>
            <person name="Belisle C."/>
            <person name="Kawarabayasi Y."/>
            <person name="Donachie S.P."/>
            <person name="Pikina A."/>
            <person name="Galperin M.Y."/>
            <person name="Koonin E.V."/>
            <person name="Makarova K.S."/>
            <person name="Omelchenko M.V."/>
            <person name="Sorokin A."/>
            <person name="Wolf Y.I."/>
            <person name="Li Q.X."/>
            <person name="Keum Y.S."/>
            <person name="Campbell S."/>
            <person name="Denery J."/>
            <person name="Aizawa S."/>
            <person name="Shibata S."/>
            <person name="Malahoff A."/>
            <person name="Alam M."/>
        </authorList>
    </citation>
    <scope>NUCLEOTIDE SEQUENCE [LARGE SCALE GENOMIC DNA]</scope>
    <source>
        <strain>ATCC BAA-735 / DSM 15497 / L2-TR</strain>
    </source>
</reference>
<gene>
    <name evidence="1" type="primary">plsX</name>
    <name type="ordered locus">IL1343</name>
</gene>
<evidence type="ECO:0000255" key="1">
    <source>
        <dbReference type="HAMAP-Rule" id="MF_00019"/>
    </source>
</evidence>